<reference key="1">
    <citation type="journal article" date="2008" name="Environ. Microbiol.">
        <title>The complete genome sequence of Moorella thermoacetica (f. Clostridium thermoaceticum).</title>
        <authorList>
            <person name="Pierce E."/>
            <person name="Xie G."/>
            <person name="Barabote R.D."/>
            <person name="Saunders E."/>
            <person name="Han C.S."/>
            <person name="Detter J.C."/>
            <person name="Richardson P."/>
            <person name="Brettin T.S."/>
            <person name="Das A."/>
            <person name="Ljungdahl L.G."/>
            <person name="Ragsdale S.W."/>
        </authorList>
    </citation>
    <scope>NUCLEOTIDE SEQUENCE [LARGE SCALE GENOMIC DNA]</scope>
    <source>
        <strain>ATCC 39073 / JCM 9320</strain>
    </source>
</reference>
<accession>Q2RFR1</accession>
<protein>
    <recommendedName>
        <fullName evidence="1">Small ribosomal subunit protein uS8</fullName>
    </recommendedName>
    <alternativeName>
        <fullName evidence="2">30S ribosomal protein S8</fullName>
    </alternativeName>
</protein>
<keyword id="KW-0687">Ribonucleoprotein</keyword>
<keyword id="KW-0689">Ribosomal protein</keyword>
<keyword id="KW-0694">RNA-binding</keyword>
<keyword id="KW-0699">rRNA-binding</keyword>
<proteinExistence type="inferred from homology"/>
<feature type="chain" id="PRO_0000290877" description="Small ribosomal subunit protein uS8">
    <location>
        <begin position="1"/>
        <end position="130"/>
    </location>
</feature>
<name>RS8_MOOTA</name>
<gene>
    <name evidence="1" type="primary">rpsH</name>
    <name type="ordered locus">Moth_2446</name>
</gene>
<comment type="function">
    <text evidence="1">One of the primary rRNA binding proteins, it binds directly to 16S rRNA central domain where it helps coordinate assembly of the platform of the 30S subunit.</text>
</comment>
<comment type="subunit">
    <text evidence="1">Part of the 30S ribosomal subunit. Contacts proteins S5 and S12.</text>
</comment>
<comment type="similarity">
    <text evidence="1">Belongs to the universal ribosomal protein uS8 family.</text>
</comment>
<organism>
    <name type="scientific">Moorella thermoacetica (strain ATCC 39073 / JCM 9320)</name>
    <dbReference type="NCBI Taxonomy" id="264732"/>
    <lineage>
        <taxon>Bacteria</taxon>
        <taxon>Bacillati</taxon>
        <taxon>Bacillota</taxon>
        <taxon>Clostridia</taxon>
        <taxon>Moorellales</taxon>
        <taxon>Moorellaceae</taxon>
        <taxon>Moorella</taxon>
    </lineage>
</organism>
<sequence>MTDPIADFLTRIRNANMVYQEKVEVPASRVKRALAEILKNEGYIKNYEYIEDNKQGILRLYLKYGPNKEKVITGLKRISCPGLRVYAKKGEIPRVLGGLGVAVISTSKGILTDKEARRQGVGGEVICYIW</sequence>
<dbReference type="EMBL" id="CP000232">
    <property type="protein sequence ID" value="ABC20728.1"/>
    <property type="molecule type" value="Genomic_DNA"/>
</dbReference>
<dbReference type="RefSeq" id="YP_431271.1">
    <property type="nucleotide sequence ID" value="NC_007644.1"/>
</dbReference>
<dbReference type="SMR" id="Q2RFR1"/>
<dbReference type="STRING" id="264732.Moth_2446"/>
<dbReference type="EnsemblBacteria" id="ABC20728">
    <property type="protein sequence ID" value="ABC20728"/>
    <property type="gene ID" value="Moth_2446"/>
</dbReference>
<dbReference type="KEGG" id="mta:Moth_2446"/>
<dbReference type="PATRIC" id="fig|264732.11.peg.2664"/>
<dbReference type="eggNOG" id="COG0096">
    <property type="taxonomic scope" value="Bacteria"/>
</dbReference>
<dbReference type="HOGENOM" id="CLU_098428_0_2_9"/>
<dbReference type="OrthoDB" id="9802617at2"/>
<dbReference type="GO" id="GO:1990904">
    <property type="term" value="C:ribonucleoprotein complex"/>
    <property type="evidence" value="ECO:0007669"/>
    <property type="project" value="UniProtKB-KW"/>
</dbReference>
<dbReference type="GO" id="GO:0005840">
    <property type="term" value="C:ribosome"/>
    <property type="evidence" value="ECO:0007669"/>
    <property type="project" value="UniProtKB-KW"/>
</dbReference>
<dbReference type="GO" id="GO:0019843">
    <property type="term" value="F:rRNA binding"/>
    <property type="evidence" value="ECO:0007669"/>
    <property type="project" value="UniProtKB-UniRule"/>
</dbReference>
<dbReference type="GO" id="GO:0003735">
    <property type="term" value="F:structural constituent of ribosome"/>
    <property type="evidence" value="ECO:0007669"/>
    <property type="project" value="InterPro"/>
</dbReference>
<dbReference type="GO" id="GO:0006412">
    <property type="term" value="P:translation"/>
    <property type="evidence" value="ECO:0007669"/>
    <property type="project" value="UniProtKB-UniRule"/>
</dbReference>
<dbReference type="FunFam" id="3.30.1370.30:FF:000002">
    <property type="entry name" value="30S ribosomal protein S8"/>
    <property type="match status" value="1"/>
</dbReference>
<dbReference type="FunFam" id="3.30.1490.10:FF:000001">
    <property type="entry name" value="30S ribosomal protein S8"/>
    <property type="match status" value="1"/>
</dbReference>
<dbReference type="Gene3D" id="3.30.1370.30">
    <property type="match status" value="1"/>
</dbReference>
<dbReference type="Gene3D" id="3.30.1490.10">
    <property type="match status" value="1"/>
</dbReference>
<dbReference type="HAMAP" id="MF_01302_B">
    <property type="entry name" value="Ribosomal_uS8_B"/>
    <property type="match status" value="1"/>
</dbReference>
<dbReference type="InterPro" id="IPR000630">
    <property type="entry name" value="Ribosomal_uS8"/>
</dbReference>
<dbReference type="InterPro" id="IPR047863">
    <property type="entry name" value="Ribosomal_uS8_CS"/>
</dbReference>
<dbReference type="InterPro" id="IPR035987">
    <property type="entry name" value="Ribosomal_uS8_sf"/>
</dbReference>
<dbReference type="NCBIfam" id="NF001109">
    <property type="entry name" value="PRK00136.1"/>
    <property type="match status" value="1"/>
</dbReference>
<dbReference type="PANTHER" id="PTHR11758">
    <property type="entry name" value="40S RIBOSOMAL PROTEIN S15A"/>
    <property type="match status" value="1"/>
</dbReference>
<dbReference type="Pfam" id="PF00410">
    <property type="entry name" value="Ribosomal_S8"/>
    <property type="match status" value="1"/>
</dbReference>
<dbReference type="SUPFAM" id="SSF56047">
    <property type="entry name" value="Ribosomal protein S8"/>
    <property type="match status" value="1"/>
</dbReference>
<dbReference type="PROSITE" id="PS00053">
    <property type="entry name" value="RIBOSOMAL_S8"/>
    <property type="match status" value="1"/>
</dbReference>
<evidence type="ECO:0000255" key="1">
    <source>
        <dbReference type="HAMAP-Rule" id="MF_01302"/>
    </source>
</evidence>
<evidence type="ECO:0000305" key="2"/>